<name>TERM_ADE07</name>
<reference key="1">
    <citation type="journal article" date="1983" name="Gene">
        <title>The nucleotide sequence of the genes encoded in early region 2b of human adenovirus type 7.</title>
        <authorList>
            <person name="Engler J.A."/>
            <person name="Hoppe M.S."/>
            <person name="van Bree M.P."/>
        </authorList>
    </citation>
    <scope>NUCLEOTIDE SEQUENCE [GENOMIC DNA]</scope>
    <source>
        <strain>Gomen</strain>
    </source>
</reference>
<organism>
    <name type="scientific">Human adenovirus B serotype 7</name>
    <name type="common">HAdV-7</name>
    <name type="synonym">Human adenovirus 7</name>
    <dbReference type="NCBI Taxonomy" id="10519"/>
    <lineage>
        <taxon>Viruses</taxon>
        <taxon>Varidnaviria</taxon>
        <taxon>Bamfordvirae</taxon>
        <taxon>Preplasmiviricota</taxon>
        <taxon>Tectiliviricetes</taxon>
        <taxon>Rowavirales</taxon>
        <taxon>Adenoviridae</taxon>
        <taxon>Mastadenovirus</taxon>
        <taxon>Human mastadenovirus B</taxon>
    </lineage>
</organism>
<sequence>MNYFMPLRNIWNRVREFPRASTTASGITWMSRYIYGYHRLMLEDLAPGAPATERWPLYRQPSPHFLIGYQYLVRTCNDYIFDTRAYSRLKYTELVRPGHQTVNWSVMANCSYTINTGAYHRFVDFDDFQATLTQVQQAILAERVVAELALVQPMRGFGITRMHGRAGEEEVPVERLMQDYYKDLARCQDDAWGMAHRLRIQQAGPKDLVLLATIRRLKTAYFNFITSSIVSPSQEGEGEERENPDRASSRPRPQETVLSLPCDCDWLDAFVERFSDPVDLETIRSLRGVPTGQLIKCIISAVSLPNGEPPSHHFREMRGGVFTLRPRENGRAVTETMRRRRGEVIERFIDRLPVRRRRRRVPPPPAAPPEEEEMLVEEEEIEEEILGAFEREVRTTIAELIRLLEEELTVSARNSQFFNFAVNFYEAMERLEALGDVSEMPLRRWIMYFFVTEHIATTLNYLFQRLCNYAVFTRHVELNLAQVVMRARDPVGAVVYSRVWNEAGMNAFSQLIGRISNDLAATVERAGRGDLQEEEIEQFMAEIAYQDNSGDVQEILRQAAVNDTEIDSVELSFRFKLTGPVAFTQRRQIQDVNRRVVAHASLLRAQYQNLPARGADVPLPAMPPGPEPPLPPGARPRHRF</sequence>
<organismHost>
    <name type="scientific">Homo sapiens</name>
    <name type="common">Human</name>
    <dbReference type="NCBI Taxonomy" id="9606"/>
</organismHost>
<accession>P03270</accession>
<feature type="chain" id="PRO_0000221895" description="Preterminal protein" evidence="1">
    <location>
        <begin position="1"/>
        <end position="640"/>
    </location>
</feature>
<feature type="chain" id="PRO_0000433934" description="Intermediate terminal protein" evidence="1">
    <location>
        <begin position="158"/>
        <end position="640"/>
    </location>
</feature>
<feature type="chain" id="PRO_0000433935" description="Terminal protein" evidence="1">
    <location>
        <begin position="321"/>
        <end position="640"/>
    </location>
</feature>
<feature type="region of interest" description="Disordered" evidence="2">
    <location>
        <begin position="232"/>
        <end position="257"/>
    </location>
</feature>
<feature type="region of interest" description="Disordered" evidence="2">
    <location>
        <begin position="614"/>
        <end position="640"/>
    </location>
</feature>
<feature type="short sequence motif" description="Nuclear localization signal" evidence="1">
    <location>
        <begin position="351"/>
        <end position="360"/>
    </location>
</feature>
<feature type="compositionally biased region" description="Pro residues" evidence="2">
    <location>
        <begin position="620"/>
        <end position="634"/>
    </location>
</feature>
<feature type="site" description="Cleavage; by adenovirus protease" evidence="1">
    <location>
        <begin position="157"/>
        <end position="158"/>
    </location>
</feature>
<feature type="site" description="Cleavage; by adenovirus protease" evidence="1">
    <location>
        <begin position="320"/>
        <end position="321"/>
    </location>
</feature>
<feature type="site" description="Priming of strand displacement replication by covalently linking the first nucleotide of the new DNA chain" evidence="1">
    <location>
        <position position="549"/>
    </location>
</feature>
<feature type="modified residue" description="O-(5'-phospho-DNA)-serine" evidence="1">
    <location>
        <position position="549"/>
    </location>
</feature>
<proteinExistence type="inferred from homology"/>
<evidence type="ECO:0000255" key="1">
    <source>
        <dbReference type="HAMAP-Rule" id="MF_04061"/>
    </source>
</evidence>
<evidence type="ECO:0000256" key="2">
    <source>
        <dbReference type="SAM" id="MobiDB-lite"/>
    </source>
</evidence>
<protein>
    <recommendedName>
        <fullName evidence="1">Preterminal protein</fullName>
        <shortName evidence="1">pTP</shortName>
    </recommendedName>
    <alternativeName>
        <fullName evidence="1">Bellett protein</fullName>
    </alternativeName>
    <alternativeName>
        <fullName evidence="1">Precursor terminal protein</fullName>
    </alternativeName>
    <component>
        <recommendedName>
            <fullName evidence="1">Intermediate terminal protein</fullName>
            <shortName evidence="1">iTP</shortName>
        </recommendedName>
    </component>
    <component>
        <recommendedName>
            <fullName evidence="1">Terminal protein</fullName>
            <shortName evidence="1">TP</shortName>
        </recommendedName>
    </component>
</protein>
<gene>
    <name evidence="1" type="primary">PTP</name>
</gene>
<keyword id="KW-0190">Covalent protein-DNA linkage</keyword>
<keyword id="KW-0235">DNA replication</keyword>
<keyword id="KW-0238">DNA-binding</keyword>
<keyword id="KW-1048">Host nucleus</keyword>
<keyword id="KW-0597">Phosphoprotein</keyword>
<keyword id="KW-1194">Viral DNA replication</keyword>
<dbReference type="EMBL" id="X03000">
    <property type="protein sequence ID" value="CAA26775.1"/>
    <property type="molecule type" value="Genomic_DNA"/>
</dbReference>
<dbReference type="PIR" id="A03841">
    <property type="entry name" value="UZADP7"/>
</dbReference>
<dbReference type="GO" id="GO:0044204">
    <property type="term" value="C:host cell nuclear matrix"/>
    <property type="evidence" value="ECO:0007669"/>
    <property type="project" value="UniProtKB-SubCell"/>
</dbReference>
<dbReference type="GO" id="GO:0003690">
    <property type="term" value="F:double-stranded DNA binding"/>
    <property type="evidence" value="ECO:0007669"/>
    <property type="project" value="UniProtKB-UniRule"/>
</dbReference>
<dbReference type="GO" id="GO:0003697">
    <property type="term" value="F:single-stranded DNA binding"/>
    <property type="evidence" value="ECO:0007669"/>
    <property type="project" value="UniProtKB-UniRule"/>
</dbReference>
<dbReference type="GO" id="GO:0006260">
    <property type="term" value="P:DNA replication"/>
    <property type="evidence" value="ECO:0007669"/>
    <property type="project" value="UniProtKB-KW"/>
</dbReference>
<dbReference type="GO" id="GO:0039687">
    <property type="term" value="P:viral DNA strand displacement replication"/>
    <property type="evidence" value="ECO:0007669"/>
    <property type="project" value="UniProtKB-UniRule"/>
</dbReference>
<dbReference type="HAMAP" id="MF_04061">
    <property type="entry name" value="ADV_TERM"/>
    <property type="match status" value="1"/>
</dbReference>
<dbReference type="InterPro" id="IPR003391">
    <property type="entry name" value="Adeno_preterminal"/>
</dbReference>
<dbReference type="Pfam" id="PF02459">
    <property type="entry name" value="Adeno_terminal"/>
    <property type="match status" value="1"/>
</dbReference>
<comment type="function">
    <text evidence="1">Protein covalently bound to the viral DNA that acts as a primer for viral genomic replication by DNA strand displacement. Assembles on the viral origin of replication in an initiation complex with viral polymerase, DBP, host NFIA and host POU2F1/OCT1. During initiation, the polymerase covalently couples the first dCTP with Ser-580 of pTP. The terminal protein stimulates the template activity over 20 fold compared to protein-free templates. Neo-synthesized viral genomes are linked to two preterminal proteins, one for each 5' end. These new genomes are encapsidated in the nucleus, and during capsid maturation by viral protease, preterminal protein is first cleaved into intermediary (iTP), then into mature TP. May play a role in host nuclear matrix localization of genomic DNA.</text>
</comment>
<comment type="subunit">
    <text evidence="1">Heterodimer with the polymerase; this heterodimer binds to bp 9 to 18 of the genome. Interacts with host POU2F1; POU2F1 binds to the auxiliary sequences in the inverted terminal repeats and tethers the pTP-POL heterodimer to the origin DNA thereby participating in the assembly of the pre-initiation complex (POL-TP-DBP-NFIA-POU2F1).</text>
</comment>
<comment type="subcellular location">
    <subcellularLocation>
        <location evidence="1">Host nucleus matrix</location>
    </subcellularLocation>
</comment>
<comment type="PTM">
    <text evidence="1">Preterminal protein is used to replicate viral genome, upon genomic encapsidation it is processed first into iTP and finally into TP by adenovirus protease.</text>
</comment>
<comment type="similarity">
    <text evidence="1">Belongs to the adenoviridae terminal protein family.</text>
</comment>